<accession>A3NRN5</accession>
<feature type="chain" id="PRO_0000374186" description="tRNA-2-methylthio-N(6)-dimethylallyladenosine synthase">
    <location>
        <begin position="1"/>
        <end position="457"/>
    </location>
</feature>
<feature type="domain" description="MTTase N-terminal" evidence="1">
    <location>
        <begin position="3"/>
        <end position="120"/>
    </location>
</feature>
<feature type="domain" description="Radical SAM core" evidence="2">
    <location>
        <begin position="143"/>
        <end position="377"/>
    </location>
</feature>
<feature type="domain" description="TRAM" evidence="1">
    <location>
        <begin position="380"/>
        <end position="447"/>
    </location>
</feature>
<feature type="binding site" evidence="1">
    <location>
        <position position="12"/>
    </location>
    <ligand>
        <name>[4Fe-4S] cluster</name>
        <dbReference type="ChEBI" id="CHEBI:49883"/>
        <label>1</label>
    </ligand>
</feature>
<feature type="binding site" evidence="1">
    <location>
        <position position="49"/>
    </location>
    <ligand>
        <name>[4Fe-4S] cluster</name>
        <dbReference type="ChEBI" id="CHEBI:49883"/>
        <label>1</label>
    </ligand>
</feature>
<feature type="binding site" evidence="1">
    <location>
        <position position="83"/>
    </location>
    <ligand>
        <name>[4Fe-4S] cluster</name>
        <dbReference type="ChEBI" id="CHEBI:49883"/>
        <label>1</label>
    </ligand>
</feature>
<feature type="binding site" evidence="1">
    <location>
        <position position="157"/>
    </location>
    <ligand>
        <name>[4Fe-4S] cluster</name>
        <dbReference type="ChEBI" id="CHEBI:49883"/>
        <label>2</label>
        <note>4Fe-4S-S-AdoMet</note>
    </ligand>
</feature>
<feature type="binding site" evidence="1">
    <location>
        <position position="161"/>
    </location>
    <ligand>
        <name>[4Fe-4S] cluster</name>
        <dbReference type="ChEBI" id="CHEBI:49883"/>
        <label>2</label>
        <note>4Fe-4S-S-AdoMet</note>
    </ligand>
</feature>
<feature type="binding site" evidence="1">
    <location>
        <position position="164"/>
    </location>
    <ligand>
        <name>[4Fe-4S] cluster</name>
        <dbReference type="ChEBI" id="CHEBI:49883"/>
        <label>2</label>
        <note>4Fe-4S-S-AdoMet</note>
    </ligand>
</feature>
<organism>
    <name type="scientific">Burkholderia pseudomallei (strain 1106a)</name>
    <dbReference type="NCBI Taxonomy" id="357348"/>
    <lineage>
        <taxon>Bacteria</taxon>
        <taxon>Pseudomonadati</taxon>
        <taxon>Pseudomonadota</taxon>
        <taxon>Betaproteobacteria</taxon>
        <taxon>Burkholderiales</taxon>
        <taxon>Burkholderiaceae</taxon>
        <taxon>Burkholderia</taxon>
        <taxon>pseudomallei group</taxon>
    </lineage>
</organism>
<keyword id="KW-0004">4Fe-4S</keyword>
<keyword id="KW-0963">Cytoplasm</keyword>
<keyword id="KW-0408">Iron</keyword>
<keyword id="KW-0411">Iron-sulfur</keyword>
<keyword id="KW-0479">Metal-binding</keyword>
<keyword id="KW-0949">S-adenosyl-L-methionine</keyword>
<keyword id="KW-0808">Transferase</keyword>
<keyword id="KW-0819">tRNA processing</keyword>
<evidence type="ECO:0000255" key="1">
    <source>
        <dbReference type="HAMAP-Rule" id="MF_01864"/>
    </source>
</evidence>
<evidence type="ECO:0000255" key="2">
    <source>
        <dbReference type="PROSITE-ProRule" id="PRU01266"/>
    </source>
</evidence>
<reference key="1">
    <citation type="journal article" date="2010" name="Genome Biol. Evol.">
        <title>Continuing evolution of Burkholderia mallei through genome reduction and large-scale rearrangements.</title>
        <authorList>
            <person name="Losada L."/>
            <person name="Ronning C.M."/>
            <person name="DeShazer D."/>
            <person name="Woods D."/>
            <person name="Fedorova N."/>
            <person name="Kim H.S."/>
            <person name="Shabalina S.A."/>
            <person name="Pearson T.R."/>
            <person name="Brinkac L."/>
            <person name="Tan P."/>
            <person name="Nandi T."/>
            <person name="Crabtree J."/>
            <person name="Badger J."/>
            <person name="Beckstrom-Sternberg S."/>
            <person name="Saqib M."/>
            <person name="Schutzer S.E."/>
            <person name="Keim P."/>
            <person name="Nierman W.C."/>
        </authorList>
    </citation>
    <scope>NUCLEOTIDE SEQUENCE [LARGE SCALE GENOMIC DNA]</scope>
    <source>
        <strain>1106a</strain>
    </source>
</reference>
<name>MIAB_BURP0</name>
<gene>
    <name evidence="1" type="primary">miaB</name>
    <name type="ordered locus">BURPS1106A_0724</name>
</gene>
<comment type="function">
    <text evidence="1">Catalyzes the methylthiolation of N6-(dimethylallyl)adenosine (i(6)A), leading to the formation of 2-methylthio-N6-(dimethylallyl)adenosine (ms(2)i(6)A) at position 37 in tRNAs that read codons beginning with uridine.</text>
</comment>
<comment type="catalytic activity">
    <reaction evidence="1">
        <text>N(6)-dimethylallyladenosine(37) in tRNA + (sulfur carrier)-SH + AH2 + 2 S-adenosyl-L-methionine = 2-methylsulfanyl-N(6)-dimethylallyladenosine(37) in tRNA + (sulfur carrier)-H + 5'-deoxyadenosine + L-methionine + A + S-adenosyl-L-homocysteine + 2 H(+)</text>
        <dbReference type="Rhea" id="RHEA:37067"/>
        <dbReference type="Rhea" id="RHEA-COMP:10375"/>
        <dbReference type="Rhea" id="RHEA-COMP:10376"/>
        <dbReference type="Rhea" id="RHEA-COMP:14737"/>
        <dbReference type="Rhea" id="RHEA-COMP:14739"/>
        <dbReference type="ChEBI" id="CHEBI:13193"/>
        <dbReference type="ChEBI" id="CHEBI:15378"/>
        <dbReference type="ChEBI" id="CHEBI:17319"/>
        <dbReference type="ChEBI" id="CHEBI:17499"/>
        <dbReference type="ChEBI" id="CHEBI:29917"/>
        <dbReference type="ChEBI" id="CHEBI:57844"/>
        <dbReference type="ChEBI" id="CHEBI:57856"/>
        <dbReference type="ChEBI" id="CHEBI:59789"/>
        <dbReference type="ChEBI" id="CHEBI:64428"/>
        <dbReference type="ChEBI" id="CHEBI:74415"/>
        <dbReference type="ChEBI" id="CHEBI:74417"/>
        <dbReference type="EC" id="2.8.4.3"/>
    </reaction>
</comment>
<comment type="cofactor">
    <cofactor evidence="1">
        <name>[4Fe-4S] cluster</name>
        <dbReference type="ChEBI" id="CHEBI:49883"/>
    </cofactor>
    <text evidence="1">Binds 2 [4Fe-4S] clusters. One cluster is coordinated with 3 cysteines and an exchangeable S-adenosyl-L-methionine.</text>
</comment>
<comment type="subunit">
    <text evidence="1">Monomer.</text>
</comment>
<comment type="subcellular location">
    <subcellularLocation>
        <location evidence="1">Cytoplasm</location>
    </subcellularLocation>
</comment>
<comment type="similarity">
    <text evidence="1">Belongs to the methylthiotransferase family. MiaB subfamily.</text>
</comment>
<sequence>MTKKVYVKTFGCQMNEYDSDKMVDVLNAAEGLEKTDTPEDADIILFNTCSVREKAQEKVFSDLGRVRELKEAKPDLLIGVGGCVASQEGASIVARAPYVDLVFGPQTLHRLPQMIDARRESGRAQVDITFPEIEKFDHLPPARVEGPSAFVSIMEGCSKYCSYCVVPYTRGDEVSRPLDDVLTEVAGLADQGVREVTLLGQNVNAYRGAIAAGSAEIADFATLIEYVADIPGIERIRYTTSHPKEFTQRLLDVYAKVPKLVDHLHLPVQHGSDRILMAMKRGYTVLEYKSVIRKLRAIRPNLSLSTDIIVGFPGETDADFDKTMALVHEMSYDTSFSFIYSPRPGTPAANLADDTPRELKLKRLQHLQATIEENVARISQSMLGKVERILVEGPSRKDPNELAGRTENNRVVNFPAPSAAHPRLIGQMIDVKINHAYPHSLRGELVLAHGDASAATH</sequence>
<dbReference type="EC" id="2.8.4.3" evidence="1"/>
<dbReference type="EMBL" id="CP000572">
    <property type="protein sequence ID" value="ABN90514.1"/>
    <property type="molecule type" value="Genomic_DNA"/>
</dbReference>
<dbReference type="RefSeq" id="WP_004190165.1">
    <property type="nucleotide sequence ID" value="NC_009076.1"/>
</dbReference>
<dbReference type="SMR" id="A3NRN5"/>
<dbReference type="GeneID" id="93059186"/>
<dbReference type="KEGG" id="bpl:BURPS1106A_0724"/>
<dbReference type="HOGENOM" id="CLU_018697_2_0_4"/>
<dbReference type="Proteomes" id="UP000006738">
    <property type="component" value="Chromosome I"/>
</dbReference>
<dbReference type="GO" id="GO:0005829">
    <property type="term" value="C:cytosol"/>
    <property type="evidence" value="ECO:0007669"/>
    <property type="project" value="TreeGrafter"/>
</dbReference>
<dbReference type="GO" id="GO:0051539">
    <property type="term" value="F:4 iron, 4 sulfur cluster binding"/>
    <property type="evidence" value="ECO:0007669"/>
    <property type="project" value="UniProtKB-UniRule"/>
</dbReference>
<dbReference type="GO" id="GO:0046872">
    <property type="term" value="F:metal ion binding"/>
    <property type="evidence" value="ECO:0007669"/>
    <property type="project" value="UniProtKB-KW"/>
</dbReference>
<dbReference type="GO" id="GO:0035597">
    <property type="term" value="F:N6-isopentenyladenosine methylthiotransferase activity"/>
    <property type="evidence" value="ECO:0007669"/>
    <property type="project" value="TreeGrafter"/>
</dbReference>
<dbReference type="CDD" id="cd01335">
    <property type="entry name" value="Radical_SAM"/>
    <property type="match status" value="1"/>
</dbReference>
<dbReference type="FunFam" id="3.40.50.12160:FF:000001">
    <property type="entry name" value="tRNA-2-methylthio-N(6)-dimethylallyladenosine synthase"/>
    <property type="match status" value="1"/>
</dbReference>
<dbReference type="FunFam" id="3.80.30.20:FF:000001">
    <property type="entry name" value="tRNA-2-methylthio-N(6)-dimethylallyladenosine synthase 2"/>
    <property type="match status" value="1"/>
</dbReference>
<dbReference type="Gene3D" id="3.40.50.12160">
    <property type="entry name" value="Methylthiotransferase, N-terminal domain"/>
    <property type="match status" value="1"/>
</dbReference>
<dbReference type="Gene3D" id="3.80.30.20">
    <property type="entry name" value="tm_1862 like domain"/>
    <property type="match status" value="1"/>
</dbReference>
<dbReference type="HAMAP" id="MF_01864">
    <property type="entry name" value="tRNA_metthiotr_MiaB"/>
    <property type="match status" value="1"/>
</dbReference>
<dbReference type="InterPro" id="IPR006638">
    <property type="entry name" value="Elp3/MiaA/NifB-like_rSAM"/>
</dbReference>
<dbReference type="InterPro" id="IPR005839">
    <property type="entry name" value="Methylthiotransferase"/>
</dbReference>
<dbReference type="InterPro" id="IPR020612">
    <property type="entry name" value="Methylthiotransferase_CS"/>
</dbReference>
<dbReference type="InterPro" id="IPR013848">
    <property type="entry name" value="Methylthiotransferase_N"/>
</dbReference>
<dbReference type="InterPro" id="IPR038135">
    <property type="entry name" value="Methylthiotransferase_N_sf"/>
</dbReference>
<dbReference type="InterPro" id="IPR006463">
    <property type="entry name" value="MiaB_methiolase"/>
</dbReference>
<dbReference type="InterPro" id="IPR007197">
    <property type="entry name" value="rSAM"/>
</dbReference>
<dbReference type="InterPro" id="IPR023404">
    <property type="entry name" value="rSAM_horseshoe"/>
</dbReference>
<dbReference type="InterPro" id="IPR002792">
    <property type="entry name" value="TRAM_dom"/>
</dbReference>
<dbReference type="NCBIfam" id="TIGR01574">
    <property type="entry name" value="miaB-methiolase"/>
    <property type="match status" value="1"/>
</dbReference>
<dbReference type="NCBIfam" id="TIGR00089">
    <property type="entry name" value="MiaB/RimO family radical SAM methylthiotransferase"/>
    <property type="match status" value="1"/>
</dbReference>
<dbReference type="PANTHER" id="PTHR43020">
    <property type="entry name" value="CDK5 REGULATORY SUBUNIT-ASSOCIATED PROTEIN 1"/>
    <property type="match status" value="1"/>
</dbReference>
<dbReference type="PANTHER" id="PTHR43020:SF2">
    <property type="entry name" value="MITOCHONDRIAL TRNA METHYLTHIOTRANSFERASE CDK5RAP1"/>
    <property type="match status" value="1"/>
</dbReference>
<dbReference type="Pfam" id="PF04055">
    <property type="entry name" value="Radical_SAM"/>
    <property type="match status" value="1"/>
</dbReference>
<dbReference type="Pfam" id="PF01938">
    <property type="entry name" value="TRAM"/>
    <property type="match status" value="1"/>
</dbReference>
<dbReference type="Pfam" id="PF00919">
    <property type="entry name" value="UPF0004"/>
    <property type="match status" value="1"/>
</dbReference>
<dbReference type="SFLD" id="SFLDF00273">
    <property type="entry name" value="(dimethylallyl)adenosine_tRNA"/>
    <property type="match status" value="1"/>
</dbReference>
<dbReference type="SFLD" id="SFLDG01082">
    <property type="entry name" value="B12-binding_domain_containing"/>
    <property type="match status" value="1"/>
</dbReference>
<dbReference type="SFLD" id="SFLDS00029">
    <property type="entry name" value="Radical_SAM"/>
    <property type="match status" value="1"/>
</dbReference>
<dbReference type="SMART" id="SM00729">
    <property type="entry name" value="Elp3"/>
    <property type="match status" value="1"/>
</dbReference>
<dbReference type="SUPFAM" id="SSF102114">
    <property type="entry name" value="Radical SAM enzymes"/>
    <property type="match status" value="1"/>
</dbReference>
<dbReference type="PROSITE" id="PS51449">
    <property type="entry name" value="MTTASE_N"/>
    <property type="match status" value="1"/>
</dbReference>
<dbReference type="PROSITE" id="PS01278">
    <property type="entry name" value="MTTASE_RADICAL"/>
    <property type="match status" value="1"/>
</dbReference>
<dbReference type="PROSITE" id="PS51918">
    <property type="entry name" value="RADICAL_SAM"/>
    <property type="match status" value="1"/>
</dbReference>
<dbReference type="PROSITE" id="PS50926">
    <property type="entry name" value="TRAM"/>
    <property type="match status" value="1"/>
</dbReference>
<protein>
    <recommendedName>
        <fullName evidence="1">tRNA-2-methylthio-N(6)-dimethylallyladenosine synthase</fullName>
        <ecNumber evidence="1">2.8.4.3</ecNumber>
    </recommendedName>
    <alternativeName>
        <fullName evidence="1">(Dimethylallyl)adenosine tRNA methylthiotransferase MiaB</fullName>
    </alternativeName>
    <alternativeName>
        <fullName evidence="1">tRNA-i(6)A37 methylthiotransferase</fullName>
    </alternativeName>
</protein>
<proteinExistence type="inferred from homology"/>